<keyword id="KW-0028">Amino-acid biosynthesis</keyword>
<keyword id="KW-0368">Histidine biosynthesis</keyword>
<keyword id="KW-0378">Hydrolase</keyword>
<keyword id="KW-0486">Methionine biosynthesis</keyword>
<keyword id="KW-0511">Multifunctional enzyme</keyword>
<keyword id="KW-0521">NADP</keyword>
<keyword id="KW-0554">One-carbon metabolism</keyword>
<keyword id="KW-0560">Oxidoreductase</keyword>
<keyword id="KW-0658">Purine biosynthesis</keyword>
<organism>
    <name type="scientific">Clostridium botulinum (strain Langeland / NCTC 10281 / Type F)</name>
    <dbReference type="NCBI Taxonomy" id="441772"/>
    <lineage>
        <taxon>Bacteria</taxon>
        <taxon>Bacillati</taxon>
        <taxon>Bacillota</taxon>
        <taxon>Clostridia</taxon>
        <taxon>Eubacteriales</taxon>
        <taxon>Clostridiaceae</taxon>
        <taxon>Clostridium</taxon>
    </lineage>
</organism>
<comment type="function">
    <text evidence="1">Catalyzes the oxidation of 5,10-methylenetetrahydrofolate to 5,10-methenyltetrahydrofolate and then the hydrolysis of 5,10-methenyltetrahydrofolate to 10-formyltetrahydrofolate.</text>
</comment>
<comment type="catalytic activity">
    <reaction evidence="1">
        <text>(6R)-5,10-methylene-5,6,7,8-tetrahydrofolate + NADP(+) = (6R)-5,10-methenyltetrahydrofolate + NADPH</text>
        <dbReference type="Rhea" id="RHEA:22812"/>
        <dbReference type="ChEBI" id="CHEBI:15636"/>
        <dbReference type="ChEBI" id="CHEBI:57455"/>
        <dbReference type="ChEBI" id="CHEBI:57783"/>
        <dbReference type="ChEBI" id="CHEBI:58349"/>
        <dbReference type="EC" id="1.5.1.5"/>
    </reaction>
</comment>
<comment type="catalytic activity">
    <reaction evidence="1">
        <text>(6R)-5,10-methenyltetrahydrofolate + H2O = (6R)-10-formyltetrahydrofolate + H(+)</text>
        <dbReference type="Rhea" id="RHEA:23700"/>
        <dbReference type="ChEBI" id="CHEBI:15377"/>
        <dbReference type="ChEBI" id="CHEBI:15378"/>
        <dbReference type="ChEBI" id="CHEBI:57455"/>
        <dbReference type="ChEBI" id="CHEBI:195366"/>
        <dbReference type="EC" id="3.5.4.9"/>
    </reaction>
</comment>
<comment type="pathway">
    <text evidence="1">One-carbon metabolism; tetrahydrofolate interconversion.</text>
</comment>
<comment type="subunit">
    <text evidence="1">Homodimer.</text>
</comment>
<comment type="similarity">
    <text evidence="1">Belongs to the tetrahydrofolate dehydrogenase/cyclohydrolase family.</text>
</comment>
<protein>
    <recommendedName>
        <fullName evidence="1">Bifunctional protein FolD</fullName>
    </recommendedName>
    <domain>
        <recommendedName>
            <fullName evidence="1">Methylenetetrahydrofolate dehydrogenase</fullName>
            <ecNumber evidence="1">1.5.1.5</ecNumber>
        </recommendedName>
    </domain>
    <domain>
        <recommendedName>
            <fullName evidence="1">Methenyltetrahydrofolate cyclohydrolase</fullName>
            <ecNumber evidence="1">3.5.4.9</ecNumber>
        </recommendedName>
    </domain>
</protein>
<accession>A7GCL0</accession>
<sequence length="282" mass="31659">MTKILYGNEVALKIKEDLNLRIDKLKEKNIIPKLAILRMGNKPDDIAYERSIIKSCEKLNIETKVEELSEDILEEDFLKLMESLNNEKEIHGILVFRPYPKHLNENTINSSIALNKDVDCMHPLNLERIFEGDLNGFMPCTPEAVIEILKYYDIDLKGKNIVIINRSMVVGKPLSMMLLSHNATVTICHSKTIDLPSITKKADIVVTAIGKAKLIKEEYFNEDSIVMDVSINVDENGKLCGDVDFENVKEKVGAITPVPKGVGSVTTTLLLKHIVDAAERNS</sequence>
<dbReference type="EC" id="1.5.1.5" evidence="1"/>
<dbReference type="EC" id="3.5.4.9" evidence="1"/>
<dbReference type="EMBL" id="CP000728">
    <property type="protein sequence ID" value="ABS41656.1"/>
    <property type="molecule type" value="Genomic_DNA"/>
</dbReference>
<dbReference type="RefSeq" id="WP_011988050.1">
    <property type="nucleotide sequence ID" value="NC_009699.1"/>
</dbReference>
<dbReference type="SMR" id="A7GCL0"/>
<dbReference type="KEGG" id="cbf:CLI_1254"/>
<dbReference type="HOGENOM" id="CLU_034045_2_1_9"/>
<dbReference type="UniPathway" id="UPA00193"/>
<dbReference type="Proteomes" id="UP000002410">
    <property type="component" value="Chromosome"/>
</dbReference>
<dbReference type="GO" id="GO:0005829">
    <property type="term" value="C:cytosol"/>
    <property type="evidence" value="ECO:0007669"/>
    <property type="project" value="TreeGrafter"/>
</dbReference>
<dbReference type="GO" id="GO:0004477">
    <property type="term" value="F:methenyltetrahydrofolate cyclohydrolase activity"/>
    <property type="evidence" value="ECO:0007669"/>
    <property type="project" value="UniProtKB-UniRule"/>
</dbReference>
<dbReference type="GO" id="GO:0004488">
    <property type="term" value="F:methylenetetrahydrofolate dehydrogenase (NADP+) activity"/>
    <property type="evidence" value="ECO:0007669"/>
    <property type="project" value="UniProtKB-UniRule"/>
</dbReference>
<dbReference type="GO" id="GO:0000105">
    <property type="term" value="P:L-histidine biosynthetic process"/>
    <property type="evidence" value="ECO:0007669"/>
    <property type="project" value="UniProtKB-KW"/>
</dbReference>
<dbReference type="GO" id="GO:0009086">
    <property type="term" value="P:methionine biosynthetic process"/>
    <property type="evidence" value="ECO:0007669"/>
    <property type="project" value="UniProtKB-KW"/>
</dbReference>
<dbReference type="GO" id="GO:0006164">
    <property type="term" value="P:purine nucleotide biosynthetic process"/>
    <property type="evidence" value="ECO:0007669"/>
    <property type="project" value="UniProtKB-KW"/>
</dbReference>
<dbReference type="GO" id="GO:0035999">
    <property type="term" value="P:tetrahydrofolate interconversion"/>
    <property type="evidence" value="ECO:0007669"/>
    <property type="project" value="UniProtKB-UniRule"/>
</dbReference>
<dbReference type="CDD" id="cd01080">
    <property type="entry name" value="NAD_bind_m-THF_DH_Cyclohyd"/>
    <property type="match status" value="1"/>
</dbReference>
<dbReference type="FunFam" id="3.40.50.720:FF:000094">
    <property type="entry name" value="Bifunctional protein FolD"/>
    <property type="match status" value="1"/>
</dbReference>
<dbReference type="FunFam" id="3.40.50.10860:FF:000005">
    <property type="entry name" value="C-1-tetrahydrofolate synthase, cytoplasmic, putative"/>
    <property type="match status" value="1"/>
</dbReference>
<dbReference type="Gene3D" id="3.40.50.10860">
    <property type="entry name" value="Leucine Dehydrogenase, chain A, domain 1"/>
    <property type="match status" value="1"/>
</dbReference>
<dbReference type="Gene3D" id="3.40.50.720">
    <property type="entry name" value="NAD(P)-binding Rossmann-like Domain"/>
    <property type="match status" value="1"/>
</dbReference>
<dbReference type="HAMAP" id="MF_01576">
    <property type="entry name" value="THF_DHG_CYH"/>
    <property type="match status" value="1"/>
</dbReference>
<dbReference type="InterPro" id="IPR046346">
    <property type="entry name" value="Aminoacid_DH-like_N_sf"/>
</dbReference>
<dbReference type="InterPro" id="IPR036291">
    <property type="entry name" value="NAD(P)-bd_dom_sf"/>
</dbReference>
<dbReference type="InterPro" id="IPR000672">
    <property type="entry name" value="THF_DH/CycHdrlase"/>
</dbReference>
<dbReference type="InterPro" id="IPR020630">
    <property type="entry name" value="THF_DH/CycHdrlase_cat_dom"/>
</dbReference>
<dbReference type="InterPro" id="IPR020631">
    <property type="entry name" value="THF_DH/CycHdrlase_NAD-bd_dom"/>
</dbReference>
<dbReference type="PANTHER" id="PTHR48099:SF5">
    <property type="entry name" value="C-1-TETRAHYDROFOLATE SYNTHASE, CYTOPLASMIC"/>
    <property type="match status" value="1"/>
</dbReference>
<dbReference type="PANTHER" id="PTHR48099">
    <property type="entry name" value="C-1-TETRAHYDROFOLATE SYNTHASE, CYTOPLASMIC-RELATED"/>
    <property type="match status" value="1"/>
</dbReference>
<dbReference type="Pfam" id="PF00763">
    <property type="entry name" value="THF_DHG_CYH"/>
    <property type="match status" value="1"/>
</dbReference>
<dbReference type="Pfam" id="PF02882">
    <property type="entry name" value="THF_DHG_CYH_C"/>
    <property type="match status" value="1"/>
</dbReference>
<dbReference type="PRINTS" id="PR00085">
    <property type="entry name" value="THFDHDRGNASE"/>
</dbReference>
<dbReference type="SUPFAM" id="SSF53223">
    <property type="entry name" value="Aminoacid dehydrogenase-like, N-terminal domain"/>
    <property type="match status" value="1"/>
</dbReference>
<dbReference type="SUPFAM" id="SSF51735">
    <property type="entry name" value="NAD(P)-binding Rossmann-fold domains"/>
    <property type="match status" value="1"/>
</dbReference>
<feature type="chain" id="PRO_1000069239" description="Bifunctional protein FolD">
    <location>
        <begin position="1"/>
        <end position="282"/>
    </location>
</feature>
<feature type="binding site" evidence="1">
    <location>
        <begin position="165"/>
        <end position="167"/>
    </location>
    <ligand>
        <name>NADP(+)</name>
        <dbReference type="ChEBI" id="CHEBI:58349"/>
    </ligand>
</feature>
<feature type="binding site" evidence="1">
    <location>
        <position position="190"/>
    </location>
    <ligand>
        <name>NADP(+)</name>
        <dbReference type="ChEBI" id="CHEBI:58349"/>
    </ligand>
</feature>
<feature type="binding site" evidence="1">
    <location>
        <position position="231"/>
    </location>
    <ligand>
        <name>NADP(+)</name>
        <dbReference type="ChEBI" id="CHEBI:58349"/>
    </ligand>
</feature>
<name>FOLD_CLOBL</name>
<proteinExistence type="inferred from homology"/>
<evidence type="ECO:0000255" key="1">
    <source>
        <dbReference type="HAMAP-Rule" id="MF_01576"/>
    </source>
</evidence>
<gene>
    <name evidence="1" type="primary">folD</name>
    <name type="ordered locus">CLI_1254</name>
</gene>
<reference key="1">
    <citation type="submission" date="2007-06" db="EMBL/GenBank/DDBJ databases">
        <authorList>
            <person name="Brinkac L.M."/>
            <person name="Daugherty S."/>
            <person name="Dodson R.J."/>
            <person name="Madupu R."/>
            <person name="Brown J.L."/>
            <person name="Bruce D."/>
            <person name="Detter C."/>
            <person name="Munk C."/>
            <person name="Smith L.A."/>
            <person name="Smith T.J."/>
            <person name="White O."/>
            <person name="Brettin T.S."/>
        </authorList>
    </citation>
    <scope>NUCLEOTIDE SEQUENCE [LARGE SCALE GENOMIC DNA]</scope>
    <source>
        <strain>Langeland / NCTC 10281 / Type F</strain>
    </source>
</reference>